<dbReference type="EMBL" id="CP000850">
    <property type="protein sequence ID" value="ABW00097.1"/>
    <property type="molecule type" value="Genomic_DNA"/>
</dbReference>
<dbReference type="SMR" id="A8M529"/>
<dbReference type="STRING" id="391037.Sare_4315"/>
<dbReference type="KEGG" id="saq:Sare_4315"/>
<dbReference type="PATRIC" id="fig|391037.6.peg.4356"/>
<dbReference type="eggNOG" id="COG0087">
    <property type="taxonomic scope" value="Bacteria"/>
</dbReference>
<dbReference type="HOGENOM" id="CLU_044142_4_1_11"/>
<dbReference type="OrthoDB" id="9806135at2"/>
<dbReference type="GO" id="GO:0022625">
    <property type="term" value="C:cytosolic large ribosomal subunit"/>
    <property type="evidence" value="ECO:0007669"/>
    <property type="project" value="TreeGrafter"/>
</dbReference>
<dbReference type="GO" id="GO:0019843">
    <property type="term" value="F:rRNA binding"/>
    <property type="evidence" value="ECO:0007669"/>
    <property type="project" value="UniProtKB-UniRule"/>
</dbReference>
<dbReference type="GO" id="GO:0003735">
    <property type="term" value="F:structural constituent of ribosome"/>
    <property type="evidence" value="ECO:0007669"/>
    <property type="project" value="InterPro"/>
</dbReference>
<dbReference type="GO" id="GO:0006412">
    <property type="term" value="P:translation"/>
    <property type="evidence" value="ECO:0007669"/>
    <property type="project" value="UniProtKB-UniRule"/>
</dbReference>
<dbReference type="FunFam" id="2.40.30.10:FF:000004">
    <property type="entry name" value="50S ribosomal protein L3"/>
    <property type="match status" value="1"/>
</dbReference>
<dbReference type="FunFam" id="3.30.160.810:FF:000001">
    <property type="entry name" value="50S ribosomal protein L3"/>
    <property type="match status" value="1"/>
</dbReference>
<dbReference type="Gene3D" id="3.30.160.810">
    <property type="match status" value="1"/>
</dbReference>
<dbReference type="Gene3D" id="2.40.30.10">
    <property type="entry name" value="Translation factors"/>
    <property type="match status" value="1"/>
</dbReference>
<dbReference type="HAMAP" id="MF_01325_B">
    <property type="entry name" value="Ribosomal_uL3_B"/>
    <property type="match status" value="1"/>
</dbReference>
<dbReference type="InterPro" id="IPR000597">
    <property type="entry name" value="Ribosomal_uL3"/>
</dbReference>
<dbReference type="InterPro" id="IPR019927">
    <property type="entry name" value="Ribosomal_uL3_bac/org-type"/>
</dbReference>
<dbReference type="InterPro" id="IPR019926">
    <property type="entry name" value="Ribosomal_uL3_CS"/>
</dbReference>
<dbReference type="InterPro" id="IPR009000">
    <property type="entry name" value="Transl_B-barrel_sf"/>
</dbReference>
<dbReference type="NCBIfam" id="TIGR03625">
    <property type="entry name" value="L3_bact"/>
    <property type="match status" value="1"/>
</dbReference>
<dbReference type="PANTHER" id="PTHR11229">
    <property type="entry name" value="50S RIBOSOMAL PROTEIN L3"/>
    <property type="match status" value="1"/>
</dbReference>
<dbReference type="PANTHER" id="PTHR11229:SF16">
    <property type="entry name" value="LARGE RIBOSOMAL SUBUNIT PROTEIN UL3C"/>
    <property type="match status" value="1"/>
</dbReference>
<dbReference type="Pfam" id="PF00297">
    <property type="entry name" value="Ribosomal_L3"/>
    <property type="match status" value="1"/>
</dbReference>
<dbReference type="SUPFAM" id="SSF50447">
    <property type="entry name" value="Translation proteins"/>
    <property type="match status" value="1"/>
</dbReference>
<dbReference type="PROSITE" id="PS00474">
    <property type="entry name" value="RIBOSOMAL_L3"/>
    <property type="match status" value="1"/>
</dbReference>
<evidence type="ECO:0000255" key="1">
    <source>
        <dbReference type="HAMAP-Rule" id="MF_01325"/>
    </source>
</evidence>
<evidence type="ECO:0000305" key="2"/>
<protein>
    <recommendedName>
        <fullName evidence="1">Large ribosomal subunit protein uL3</fullName>
    </recommendedName>
    <alternativeName>
        <fullName evidence="2">50S ribosomal protein L3</fullName>
    </alternativeName>
</protein>
<comment type="function">
    <text evidence="1">One of the primary rRNA binding proteins, it binds directly near the 3'-end of the 23S rRNA, where it nucleates assembly of the 50S subunit.</text>
</comment>
<comment type="subunit">
    <text evidence="1">Part of the 50S ribosomal subunit. Forms a cluster with proteins L14 and L19.</text>
</comment>
<comment type="similarity">
    <text evidence="1">Belongs to the universal ribosomal protein uL3 family.</text>
</comment>
<feature type="chain" id="PRO_0000353614" description="Large ribosomal subunit protein uL3">
    <location>
        <begin position="1"/>
        <end position="219"/>
    </location>
</feature>
<sequence length="219" mass="23253">MDRQVKGILGAKLGMTQVWDNNRVVPVTVVQAGPCVVSQVRSHQKDGYAAVQLAYGAIDPRKVKKPISGHYTKADVAPRRHIVELRTTDAAEYSLGQEVTVEQFPAGISVDVTGKTKGKGYAGPMKRHGFHGLRASHGVERKHRSPGSIGGCATPGRVFKGTRMAGRMGGVRYTVQNLTVQAVDTENNLLLVRGAIPGPKGALVLVRTAAKAKKGGAAK</sequence>
<reference key="1">
    <citation type="submission" date="2007-10" db="EMBL/GenBank/DDBJ databases">
        <title>Complete sequence of Salinispora arenicola CNS-205.</title>
        <authorList>
            <consortium name="US DOE Joint Genome Institute"/>
            <person name="Copeland A."/>
            <person name="Lucas S."/>
            <person name="Lapidus A."/>
            <person name="Barry K."/>
            <person name="Glavina del Rio T."/>
            <person name="Dalin E."/>
            <person name="Tice H."/>
            <person name="Pitluck S."/>
            <person name="Foster B."/>
            <person name="Schmutz J."/>
            <person name="Larimer F."/>
            <person name="Land M."/>
            <person name="Hauser L."/>
            <person name="Kyrpides N."/>
            <person name="Ivanova N."/>
            <person name="Jensen P.R."/>
            <person name="Moore B.S."/>
            <person name="Penn K."/>
            <person name="Jenkins C."/>
            <person name="Udwary D."/>
            <person name="Xiang L."/>
            <person name="Gontang E."/>
            <person name="Richardson P."/>
        </authorList>
    </citation>
    <scope>NUCLEOTIDE SEQUENCE [LARGE SCALE GENOMIC DNA]</scope>
    <source>
        <strain>CNS-205</strain>
    </source>
</reference>
<keyword id="KW-0687">Ribonucleoprotein</keyword>
<keyword id="KW-0689">Ribosomal protein</keyword>
<keyword id="KW-0694">RNA-binding</keyword>
<keyword id="KW-0699">rRNA-binding</keyword>
<organism>
    <name type="scientific">Salinispora arenicola (strain CNS-205)</name>
    <dbReference type="NCBI Taxonomy" id="391037"/>
    <lineage>
        <taxon>Bacteria</taxon>
        <taxon>Bacillati</taxon>
        <taxon>Actinomycetota</taxon>
        <taxon>Actinomycetes</taxon>
        <taxon>Micromonosporales</taxon>
        <taxon>Micromonosporaceae</taxon>
        <taxon>Salinispora</taxon>
    </lineage>
</organism>
<accession>A8M529</accession>
<gene>
    <name evidence="1" type="primary">rplC</name>
    <name type="ordered locus">Sare_4315</name>
</gene>
<proteinExistence type="inferred from homology"/>
<name>RL3_SALAI</name>